<comment type="function">
    <text evidence="1">Component of the large ribosomal subunit. The ribosome is a large ribonucleoprotein complex responsible for the synthesis of proteins in the cell.</text>
</comment>
<comment type="subunit">
    <text evidence="1">Component of the large ribosomal subunit.</text>
</comment>
<comment type="subcellular location">
    <subcellularLocation>
        <location evidence="1">Cytoplasm</location>
    </subcellularLocation>
</comment>
<comment type="similarity">
    <text evidence="3">Belongs to the eukaryotic ribosomal protein eL22 family.</text>
</comment>
<accession>P47198</accession>
<keyword id="KW-0963">Cytoplasm</keyword>
<keyword id="KW-0358">Heparin-binding</keyword>
<keyword id="KW-0597">Phosphoprotein</keyword>
<keyword id="KW-1185">Reference proteome</keyword>
<keyword id="KW-0687">Ribonucleoprotein</keyword>
<keyword id="KW-0689">Ribosomal protein</keyword>
<keyword id="KW-0694">RNA-binding</keyword>
<name>RL22_RAT</name>
<evidence type="ECO:0000250" key="1">
    <source>
        <dbReference type="UniProtKB" id="P35268"/>
    </source>
</evidence>
<evidence type="ECO:0000250" key="2">
    <source>
        <dbReference type="UniProtKB" id="P67984"/>
    </source>
</evidence>
<evidence type="ECO:0000305" key="3"/>
<dbReference type="EMBL" id="X78444">
    <property type="protein sequence ID" value="CAA55204.1"/>
    <property type="molecule type" value="mRNA"/>
</dbReference>
<dbReference type="PIR" id="S52084">
    <property type="entry name" value="S52084"/>
</dbReference>
<dbReference type="RefSeq" id="NP_112366.1">
    <property type="nucleotide sequence ID" value="NM_031104.1"/>
</dbReference>
<dbReference type="SMR" id="P47198"/>
<dbReference type="BioGRID" id="249640">
    <property type="interactions" value="4"/>
</dbReference>
<dbReference type="FunCoup" id="P47198">
    <property type="interactions" value="2683"/>
</dbReference>
<dbReference type="IntAct" id="P47198">
    <property type="interactions" value="9"/>
</dbReference>
<dbReference type="MINT" id="P47198"/>
<dbReference type="STRING" id="10116.ENSRNOP00000014905"/>
<dbReference type="PhosphoSitePlus" id="P47198"/>
<dbReference type="jPOST" id="P47198"/>
<dbReference type="PaxDb" id="10116-ENSRNOP00000014905"/>
<dbReference type="GeneID" id="81768"/>
<dbReference type="KEGG" id="rno:81768"/>
<dbReference type="UCSC" id="RGD:621189">
    <property type="organism name" value="rat"/>
</dbReference>
<dbReference type="AGR" id="RGD:621189"/>
<dbReference type="CTD" id="6146"/>
<dbReference type="RGD" id="621189">
    <property type="gene designation" value="Rpl22"/>
</dbReference>
<dbReference type="eggNOG" id="KOG3434">
    <property type="taxonomic scope" value="Eukaryota"/>
</dbReference>
<dbReference type="InParanoid" id="P47198"/>
<dbReference type="PhylomeDB" id="P47198"/>
<dbReference type="Reactome" id="R-RNO-156827">
    <property type="pathway name" value="L13a-mediated translational silencing of Ceruloplasmin expression"/>
</dbReference>
<dbReference type="Reactome" id="R-RNO-1799339">
    <property type="pathway name" value="SRP-dependent cotranslational protein targeting to membrane"/>
</dbReference>
<dbReference type="Reactome" id="R-RNO-6791226">
    <property type="pathway name" value="Major pathway of rRNA processing in the nucleolus and cytosol"/>
</dbReference>
<dbReference type="Reactome" id="R-RNO-72689">
    <property type="pathway name" value="Formation of a pool of free 40S subunits"/>
</dbReference>
<dbReference type="Reactome" id="R-RNO-72706">
    <property type="pathway name" value="GTP hydrolysis and joining of the 60S ribosomal subunit"/>
</dbReference>
<dbReference type="Reactome" id="R-RNO-975956">
    <property type="pathway name" value="Nonsense Mediated Decay (NMD) independent of the Exon Junction Complex (EJC)"/>
</dbReference>
<dbReference type="Reactome" id="R-RNO-975957">
    <property type="pathway name" value="Nonsense Mediated Decay (NMD) enhanced by the Exon Junction Complex (EJC)"/>
</dbReference>
<dbReference type="PRO" id="PR:P47198"/>
<dbReference type="Proteomes" id="UP000002494">
    <property type="component" value="Unplaced"/>
</dbReference>
<dbReference type="GO" id="GO:0005737">
    <property type="term" value="C:cytoplasm"/>
    <property type="evidence" value="ECO:0000266"/>
    <property type="project" value="RGD"/>
</dbReference>
<dbReference type="GO" id="GO:0022625">
    <property type="term" value="C:cytosolic large ribosomal subunit"/>
    <property type="evidence" value="ECO:0000314"/>
    <property type="project" value="RGD"/>
</dbReference>
<dbReference type="GO" id="GO:0022626">
    <property type="term" value="C:cytosolic ribosome"/>
    <property type="evidence" value="ECO:0000266"/>
    <property type="project" value="RGD"/>
</dbReference>
<dbReference type="GO" id="GO:0098978">
    <property type="term" value="C:glutamatergic synapse"/>
    <property type="evidence" value="ECO:0000266"/>
    <property type="project" value="RGD"/>
</dbReference>
<dbReference type="GO" id="GO:0005634">
    <property type="term" value="C:nucleus"/>
    <property type="evidence" value="ECO:0000266"/>
    <property type="project" value="RGD"/>
</dbReference>
<dbReference type="GO" id="GO:0098793">
    <property type="term" value="C:presynapse"/>
    <property type="evidence" value="ECO:0000266"/>
    <property type="project" value="RGD"/>
</dbReference>
<dbReference type="GO" id="GO:1990904">
    <property type="term" value="C:ribonucleoprotein complex"/>
    <property type="evidence" value="ECO:0000266"/>
    <property type="project" value="RGD"/>
</dbReference>
<dbReference type="GO" id="GO:0005840">
    <property type="term" value="C:ribosome"/>
    <property type="evidence" value="ECO:0000314"/>
    <property type="project" value="RGD"/>
</dbReference>
<dbReference type="GO" id="GO:0045202">
    <property type="term" value="C:synapse"/>
    <property type="evidence" value="ECO:0000266"/>
    <property type="project" value="RGD"/>
</dbReference>
<dbReference type="GO" id="GO:0008201">
    <property type="term" value="F:heparin binding"/>
    <property type="evidence" value="ECO:0000266"/>
    <property type="project" value="RGD"/>
</dbReference>
<dbReference type="GO" id="GO:0042802">
    <property type="term" value="F:identical protein binding"/>
    <property type="evidence" value="ECO:0000266"/>
    <property type="project" value="RGD"/>
</dbReference>
<dbReference type="GO" id="GO:0003723">
    <property type="term" value="F:RNA binding"/>
    <property type="evidence" value="ECO:0000318"/>
    <property type="project" value="GO_Central"/>
</dbReference>
<dbReference type="GO" id="GO:0003735">
    <property type="term" value="F:structural constituent of ribosome"/>
    <property type="evidence" value="ECO:0000266"/>
    <property type="project" value="RGD"/>
</dbReference>
<dbReference type="GO" id="GO:0046632">
    <property type="term" value="P:alpha-beta T cell differentiation"/>
    <property type="evidence" value="ECO:0000266"/>
    <property type="project" value="RGD"/>
</dbReference>
<dbReference type="GO" id="GO:0002181">
    <property type="term" value="P:cytoplasmic translation"/>
    <property type="evidence" value="ECO:0000318"/>
    <property type="project" value="GO_Central"/>
</dbReference>
<dbReference type="GO" id="GO:0140236">
    <property type="term" value="P:translation at presynapse"/>
    <property type="evidence" value="ECO:0000266"/>
    <property type="project" value="RGD"/>
</dbReference>
<dbReference type="FunFam" id="3.30.1360.210:FF:000001">
    <property type="entry name" value="60S ribosomal protein L22 1"/>
    <property type="match status" value="1"/>
</dbReference>
<dbReference type="Gene3D" id="3.30.1360.210">
    <property type="match status" value="1"/>
</dbReference>
<dbReference type="InterPro" id="IPR002671">
    <property type="entry name" value="Ribosomal_eL22"/>
</dbReference>
<dbReference type="InterPro" id="IPR038526">
    <property type="entry name" value="Ribosomal_eL22_sf"/>
</dbReference>
<dbReference type="PANTHER" id="PTHR10064">
    <property type="entry name" value="60S RIBOSOMAL PROTEIN L22"/>
    <property type="match status" value="1"/>
</dbReference>
<dbReference type="PANTHER" id="PTHR10064:SF2">
    <property type="entry name" value="LARGE RIBOSOMAL SUBUNIT PROTEIN EL22"/>
    <property type="match status" value="1"/>
</dbReference>
<dbReference type="Pfam" id="PF01776">
    <property type="entry name" value="Ribosomal_L22e"/>
    <property type="match status" value="1"/>
</dbReference>
<feature type="chain" id="PRO_0000215504" description="Large ribosomal subunit protein eL22">
    <location>
        <begin position="1"/>
        <end position="128"/>
    </location>
</feature>
<feature type="modified residue" description="Phosphothreonine" evidence="2">
    <location>
        <position position="62"/>
    </location>
</feature>
<feature type="modified residue" description="Phosphoserine" evidence="1">
    <location>
        <position position="66"/>
    </location>
</feature>
<feature type="modified residue" description="N6-succinyllysine" evidence="2">
    <location>
        <position position="69"/>
    </location>
</feature>
<reference key="1">
    <citation type="journal article" date="1995" name="Biochim. Biophys. Acta">
        <title>The primary structure of rat ribosomal protein L22.</title>
        <authorList>
            <person name="Chan Y.-L."/>
            <person name="Wool I.G."/>
        </authorList>
    </citation>
    <scope>NUCLEOTIDE SEQUENCE [MRNA]</scope>
    <source>
        <strain>Sprague-Dawley</strain>
        <tissue>Liver</tissue>
    </source>
</reference>
<sequence length="128" mass="14789">MAPVKKLVAKGGKKKKQVLKFTLDCTHPVEDGIMDAANFEQFLQERIKVNGKAGNLGGGVVTIERSKSKITVTSEEPFSKRYLKYLTKKYLKKNNLRDWLRVVANSKESYELRYFQINQDEEEEEDED</sequence>
<proteinExistence type="evidence at transcript level"/>
<protein>
    <recommendedName>
        <fullName evidence="3">Large ribosomal subunit protein eL22</fullName>
    </recommendedName>
    <alternativeName>
        <fullName>60S ribosomal protein L22</fullName>
    </alternativeName>
</protein>
<gene>
    <name type="primary">Rpl22</name>
</gene>
<organism>
    <name type="scientific">Rattus norvegicus</name>
    <name type="common">Rat</name>
    <dbReference type="NCBI Taxonomy" id="10116"/>
    <lineage>
        <taxon>Eukaryota</taxon>
        <taxon>Metazoa</taxon>
        <taxon>Chordata</taxon>
        <taxon>Craniata</taxon>
        <taxon>Vertebrata</taxon>
        <taxon>Euteleostomi</taxon>
        <taxon>Mammalia</taxon>
        <taxon>Eutheria</taxon>
        <taxon>Euarchontoglires</taxon>
        <taxon>Glires</taxon>
        <taxon>Rodentia</taxon>
        <taxon>Myomorpha</taxon>
        <taxon>Muroidea</taxon>
        <taxon>Muridae</taxon>
        <taxon>Murinae</taxon>
        <taxon>Rattus</taxon>
    </lineage>
</organism>